<proteinExistence type="inferred from homology"/>
<sequence length="207" mass="23311">MIRIKVCGITNIEDAINISKAGVDALGFILAESPRKVELSKVLEISKELPPFVSRVAVVVNPVKEEIEKIERSKVFDYVQFHGSEDVNIIKNCKLKTIKAIKIENKSSLEEISKYNDFVDYFLFDTKIGEKIGGTGHTFNWEILKEANIKKPFILAGGLSPENIVEAIKTIRPNAVDLNSKVELYPGKKDIRLIKETIDRINSIKIK</sequence>
<accession>A9BHQ4</accession>
<protein>
    <recommendedName>
        <fullName evidence="1">N-(5'-phosphoribosyl)anthranilate isomerase</fullName>
        <shortName evidence="1">PRAI</shortName>
        <ecNumber evidence="1">5.3.1.24</ecNumber>
    </recommendedName>
</protein>
<evidence type="ECO:0000255" key="1">
    <source>
        <dbReference type="HAMAP-Rule" id="MF_00135"/>
    </source>
</evidence>
<dbReference type="EC" id="5.3.1.24" evidence="1"/>
<dbReference type="EMBL" id="CP000879">
    <property type="protein sequence ID" value="ABX31926.1"/>
    <property type="molecule type" value="Genomic_DNA"/>
</dbReference>
<dbReference type="RefSeq" id="WP_012209026.1">
    <property type="nucleotide sequence ID" value="NC_010003.1"/>
</dbReference>
<dbReference type="SMR" id="A9BHQ4"/>
<dbReference type="STRING" id="403833.Pmob_1209"/>
<dbReference type="KEGG" id="pmo:Pmob_1209"/>
<dbReference type="eggNOG" id="COG0135">
    <property type="taxonomic scope" value="Bacteria"/>
</dbReference>
<dbReference type="HOGENOM" id="CLU_076364_2_0_0"/>
<dbReference type="OrthoDB" id="9786954at2"/>
<dbReference type="UniPathway" id="UPA00035">
    <property type="reaction ID" value="UER00042"/>
</dbReference>
<dbReference type="Proteomes" id="UP000000789">
    <property type="component" value="Chromosome"/>
</dbReference>
<dbReference type="GO" id="GO:0004640">
    <property type="term" value="F:phosphoribosylanthranilate isomerase activity"/>
    <property type="evidence" value="ECO:0007669"/>
    <property type="project" value="UniProtKB-UniRule"/>
</dbReference>
<dbReference type="GO" id="GO:0000162">
    <property type="term" value="P:L-tryptophan biosynthetic process"/>
    <property type="evidence" value="ECO:0007669"/>
    <property type="project" value="UniProtKB-UniRule"/>
</dbReference>
<dbReference type="CDD" id="cd00405">
    <property type="entry name" value="PRAI"/>
    <property type="match status" value="1"/>
</dbReference>
<dbReference type="FunFam" id="3.20.20.70:FF:000075">
    <property type="entry name" value="Tryptophan biosynthesis protein TRP1"/>
    <property type="match status" value="1"/>
</dbReference>
<dbReference type="Gene3D" id="3.20.20.70">
    <property type="entry name" value="Aldolase class I"/>
    <property type="match status" value="1"/>
</dbReference>
<dbReference type="HAMAP" id="MF_00135">
    <property type="entry name" value="PRAI"/>
    <property type="match status" value="1"/>
</dbReference>
<dbReference type="InterPro" id="IPR013785">
    <property type="entry name" value="Aldolase_TIM"/>
</dbReference>
<dbReference type="InterPro" id="IPR001240">
    <property type="entry name" value="PRAI_dom"/>
</dbReference>
<dbReference type="InterPro" id="IPR011060">
    <property type="entry name" value="RibuloseP-bd_barrel"/>
</dbReference>
<dbReference type="InterPro" id="IPR044643">
    <property type="entry name" value="TrpF_fam"/>
</dbReference>
<dbReference type="NCBIfam" id="NF002298">
    <property type="entry name" value="PRK01222.1-4"/>
    <property type="match status" value="1"/>
</dbReference>
<dbReference type="PANTHER" id="PTHR42894">
    <property type="entry name" value="N-(5'-PHOSPHORIBOSYL)ANTHRANILATE ISOMERASE"/>
    <property type="match status" value="1"/>
</dbReference>
<dbReference type="PANTHER" id="PTHR42894:SF1">
    <property type="entry name" value="N-(5'-PHOSPHORIBOSYL)ANTHRANILATE ISOMERASE"/>
    <property type="match status" value="1"/>
</dbReference>
<dbReference type="Pfam" id="PF00697">
    <property type="entry name" value="PRAI"/>
    <property type="match status" value="1"/>
</dbReference>
<dbReference type="SUPFAM" id="SSF51366">
    <property type="entry name" value="Ribulose-phoshate binding barrel"/>
    <property type="match status" value="1"/>
</dbReference>
<reference key="1">
    <citation type="submission" date="2007-11" db="EMBL/GenBank/DDBJ databases">
        <title>Complete sequence of Petroga mobilis SJ95.</title>
        <authorList>
            <consortium name="US DOE Joint Genome Institute"/>
            <person name="Copeland A."/>
            <person name="Lucas S."/>
            <person name="Lapidus A."/>
            <person name="Barry K."/>
            <person name="Glavina del Rio T."/>
            <person name="Dalin E."/>
            <person name="Tice H."/>
            <person name="Pitluck S."/>
            <person name="Meincke L."/>
            <person name="Brettin T."/>
            <person name="Bruce D."/>
            <person name="Detter J.C."/>
            <person name="Han C."/>
            <person name="Kuske C.R."/>
            <person name="Schmutz J."/>
            <person name="Larimer F."/>
            <person name="Land M."/>
            <person name="Hauser L."/>
            <person name="Kyrpides N."/>
            <person name="Mikhailova N."/>
            <person name="Noll K."/>
            <person name="Richardson P."/>
        </authorList>
    </citation>
    <scope>NUCLEOTIDE SEQUENCE [LARGE SCALE GENOMIC DNA]</scope>
    <source>
        <strain>DSM 10674 / SJ95</strain>
    </source>
</reference>
<organism>
    <name type="scientific">Petrotoga mobilis (strain DSM 10674 / SJ95)</name>
    <dbReference type="NCBI Taxonomy" id="403833"/>
    <lineage>
        <taxon>Bacteria</taxon>
        <taxon>Thermotogati</taxon>
        <taxon>Thermotogota</taxon>
        <taxon>Thermotogae</taxon>
        <taxon>Petrotogales</taxon>
        <taxon>Petrotogaceae</taxon>
        <taxon>Petrotoga</taxon>
    </lineage>
</organism>
<comment type="catalytic activity">
    <reaction evidence="1">
        <text>N-(5-phospho-beta-D-ribosyl)anthranilate = 1-(2-carboxyphenylamino)-1-deoxy-D-ribulose 5-phosphate</text>
        <dbReference type="Rhea" id="RHEA:21540"/>
        <dbReference type="ChEBI" id="CHEBI:18277"/>
        <dbReference type="ChEBI" id="CHEBI:58613"/>
        <dbReference type="EC" id="5.3.1.24"/>
    </reaction>
</comment>
<comment type="pathway">
    <text evidence="1">Amino-acid biosynthesis; L-tryptophan biosynthesis; L-tryptophan from chorismate: step 3/5.</text>
</comment>
<comment type="similarity">
    <text evidence="1">Belongs to the TrpF family.</text>
</comment>
<feature type="chain" id="PRO_1000076439" description="N-(5'-phosphoribosyl)anthranilate isomerase">
    <location>
        <begin position="1"/>
        <end position="207"/>
    </location>
</feature>
<name>TRPF_PETMO</name>
<gene>
    <name evidence="1" type="primary">trpF</name>
    <name type="ordered locus">Pmob_1209</name>
</gene>
<keyword id="KW-0028">Amino-acid biosynthesis</keyword>
<keyword id="KW-0057">Aromatic amino acid biosynthesis</keyword>
<keyword id="KW-0413">Isomerase</keyword>
<keyword id="KW-0822">Tryptophan biosynthesis</keyword>